<organism>
    <name type="scientific">Homo sapiens</name>
    <name type="common">Human</name>
    <dbReference type="NCBI Taxonomy" id="9606"/>
    <lineage>
        <taxon>Eukaryota</taxon>
        <taxon>Metazoa</taxon>
        <taxon>Chordata</taxon>
        <taxon>Craniata</taxon>
        <taxon>Vertebrata</taxon>
        <taxon>Euteleostomi</taxon>
        <taxon>Mammalia</taxon>
        <taxon>Eutheria</taxon>
        <taxon>Euarchontoglires</taxon>
        <taxon>Primates</taxon>
        <taxon>Haplorrhini</taxon>
        <taxon>Catarrhini</taxon>
        <taxon>Hominidae</taxon>
        <taxon>Homo</taxon>
    </lineage>
</organism>
<accession>Q8N961</accession>
<accession>A8K6S9</accession>
<accession>E9PRW7</accession>
<accession>Q52LD6</accession>
<accession>Q6MZW4</accession>
<accession>Q8NB44</accession>
<feature type="chain" id="PRO_0000066887" description="Ankyrin repeat and BTB/POZ domain-containing protein 2">
    <location>
        <begin position="1"/>
        <end position="1025"/>
    </location>
</feature>
<feature type="repeat" description="ANK 1">
    <location>
        <begin position="521"/>
        <end position="550"/>
    </location>
</feature>
<feature type="repeat" description="ANK 2">
    <location>
        <begin position="567"/>
        <end position="596"/>
    </location>
</feature>
<feature type="repeat" description="ANK 3">
    <location>
        <begin position="606"/>
        <end position="635"/>
    </location>
</feature>
<feature type="repeat" description="ANK 4">
    <location>
        <begin position="649"/>
        <end position="678"/>
    </location>
</feature>
<feature type="domain" description="BTB" evidence="2">
    <location>
        <begin position="845"/>
        <end position="914"/>
    </location>
</feature>
<feature type="splice variant" id="VSP_046439" description="In isoform 2." evidence="4">
    <location>
        <begin position="1"/>
        <end position="186"/>
    </location>
</feature>
<feature type="sequence variant" id="VAR_022087" description="In dbSNP:rs1925368." evidence="3">
    <original>H</original>
    <variation>Q</variation>
    <location>
        <position position="250"/>
    </location>
</feature>
<feature type="sequence variant" id="VAR_024171" description="In dbSNP:rs2473928.">
    <original>T</original>
    <variation>A</variation>
    <location>
        <position position="918"/>
    </location>
</feature>
<feature type="sequence conflict" description="In Ref. 1; BAF84433." evidence="5" ref="1">
    <original>A</original>
    <variation>D</variation>
    <location>
        <position position="189"/>
    </location>
</feature>
<evidence type="ECO:0000250" key="1"/>
<evidence type="ECO:0000255" key="2">
    <source>
        <dbReference type="PROSITE-ProRule" id="PRU00037"/>
    </source>
</evidence>
<evidence type="ECO:0000269" key="3">
    <source>
    </source>
</evidence>
<evidence type="ECO:0000303" key="4">
    <source>
    </source>
</evidence>
<evidence type="ECO:0000305" key="5"/>
<reference key="1">
    <citation type="journal article" date="2004" name="Nat. Genet.">
        <title>Complete sequencing and characterization of 21,243 full-length human cDNAs.</title>
        <authorList>
            <person name="Ota T."/>
            <person name="Suzuki Y."/>
            <person name="Nishikawa T."/>
            <person name="Otsuki T."/>
            <person name="Sugiyama T."/>
            <person name="Irie R."/>
            <person name="Wakamatsu A."/>
            <person name="Hayashi K."/>
            <person name="Sato H."/>
            <person name="Nagai K."/>
            <person name="Kimura K."/>
            <person name="Makita H."/>
            <person name="Sekine M."/>
            <person name="Obayashi M."/>
            <person name="Nishi T."/>
            <person name="Shibahara T."/>
            <person name="Tanaka T."/>
            <person name="Ishii S."/>
            <person name="Yamamoto J."/>
            <person name="Saito K."/>
            <person name="Kawai Y."/>
            <person name="Isono Y."/>
            <person name="Nakamura Y."/>
            <person name="Nagahari K."/>
            <person name="Murakami K."/>
            <person name="Yasuda T."/>
            <person name="Iwayanagi T."/>
            <person name="Wagatsuma M."/>
            <person name="Shiratori A."/>
            <person name="Sudo H."/>
            <person name="Hosoiri T."/>
            <person name="Kaku Y."/>
            <person name="Kodaira H."/>
            <person name="Kondo H."/>
            <person name="Sugawara M."/>
            <person name="Takahashi M."/>
            <person name="Kanda K."/>
            <person name="Yokoi T."/>
            <person name="Furuya T."/>
            <person name="Kikkawa E."/>
            <person name="Omura Y."/>
            <person name="Abe K."/>
            <person name="Kamihara K."/>
            <person name="Katsuta N."/>
            <person name="Sato K."/>
            <person name="Tanikawa M."/>
            <person name="Yamazaki M."/>
            <person name="Ninomiya K."/>
            <person name="Ishibashi T."/>
            <person name="Yamashita H."/>
            <person name="Murakawa K."/>
            <person name="Fujimori K."/>
            <person name="Tanai H."/>
            <person name="Kimata M."/>
            <person name="Watanabe M."/>
            <person name="Hiraoka S."/>
            <person name="Chiba Y."/>
            <person name="Ishida S."/>
            <person name="Ono Y."/>
            <person name="Takiguchi S."/>
            <person name="Watanabe S."/>
            <person name="Yosida M."/>
            <person name="Hotuta T."/>
            <person name="Kusano J."/>
            <person name="Kanehori K."/>
            <person name="Takahashi-Fujii A."/>
            <person name="Hara H."/>
            <person name="Tanase T.-O."/>
            <person name="Nomura Y."/>
            <person name="Togiya S."/>
            <person name="Komai F."/>
            <person name="Hara R."/>
            <person name="Takeuchi K."/>
            <person name="Arita M."/>
            <person name="Imose N."/>
            <person name="Musashino K."/>
            <person name="Yuuki H."/>
            <person name="Oshima A."/>
            <person name="Sasaki N."/>
            <person name="Aotsuka S."/>
            <person name="Yoshikawa Y."/>
            <person name="Matsunawa H."/>
            <person name="Ichihara T."/>
            <person name="Shiohata N."/>
            <person name="Sano S."/>
            <person name="Moriya S."/>
            <person name="Momiyama H."/>
            <person name="Satoh N."/>
            <person name="Takami S."/>
            <person name="Terashima Y."/>
            <person name="Suzuki O."/>
            <person name="Nakagawa S."/>
            <person name="Senoh A."/>
            <person name="Mizoguchi H."/>
            <person name="Goto Y."/>
            <person name="Shimizu F."/>
            <person name="Wakebe H."/>
            <person name="Hishigaki H."/>
            <person name="Watanabe T."/>
            <person name="Sugiyama A."/>
            <person name="Takemoto M."/>
            <person name="Kawakami B."/>
            <person name="Yamazaki M."/>
            <person name="Watanabe K."/>
            <person name="Kumagai A."/>
            <person name="Itakura S."/>
            <person name="Fukuzumi Y."/>
            <person name="Fujimori Y."/>
            <person name="Komiyama M."/>
            <person name="Tashiro H."/>
            <person name="Tanigami A."/>
            <person name="Fujiwara T."/>
            <person name="Ono T."/>
            <person name="Yamada K."/>
            <person name="Fujii Y."/>
            <person name="Ozaki K."/>
            <person name="Hirao M."/>
            <person name="Ohmori Y."/>
            <person name="Kawabata A."/>
            <person name="Hikiji T."/>
            <person name="Kobatake N."/>
            <person name="Inagaki H."/>
            <person name="Ikema Y."/>
            <person name="Okamoto S."/>
            <person name="Okitani R."/>
            <person name="Kawakami T."/>
            <person name="Noguchi S."/>
            <person name="Itoh T."/>
            <person name="Shigeta K."/>
            <person name="Senba T."/>
            <person name="Matsumura K."/>
            <person name="Nakajima Y."/>
            <person name="Mizuno T."/>
            <person name="Morinaga M."/>
            <person name="Sasaki M."/>
            <person name="Togashi T."/>
            <person name="Oyama M."/>
            <person name="Hata H."/>
            <person name="Watanabe M."/>
            <person name="Komatsu T."/>
            <person name="Mizushima-Sugano J."/>
            <person name="Satoh T."/>
            <person name="Shirai Y."/>
            <person name="Takahashi Y."/>
            <person name="Nakagawa K."/>
            <person name="Okumura K."/>
            <person name="Nagase T."/>
            <person name="Nomura N."/>
            <person name="Kikuchi H."/>
            <person name="Masuho Y."/>
            <person name="Yamashita R."/>
            <person name="Nakai K."/>
            <person name="Yada T."/>
            <person name="Nakamura Y."/>
            <person name="Ohara O."/>
            <person name="Isogai T."/>
            <person name="Sugano S."/>
        </authorList>
    </citation>
    <scope>NUCLEOTIDE SEQUENCE [LARGE SCALE MRNA] (ISOFORMS 1 AND 2)</scope>
    <scope>VARIANT GLN-250</scope>
    <source>
        <tissue>Fetal brain</tissue>
        <tissue>Placenta</tissue>
    </source>
</reference>
<reference key="2">
    <citation type="journal article" date="2006" name="Nature">
        <title>Human chromosome 11 DNA sequence and analysis including novel gene identification.</title>
        <authorList>
            <person name="Taylor T.D."/>
            <person name="Noguchi H."/>
            <person name="Totoki Y."/>
            <person name="Toyoda A."/>
            <person name="Kuroki Y."/>
            <person name="Dewar K."/>
            <person name="Lloyd C."/>
            <person name="Itoh T."/>
            <person name="Takeda T."/>
            <person name="Kim D.-W."/>
            <person name="She X."/>
            <person name="Barlow K.F."/>
            <person name="Bloom T."/>
            <person name="Bruford E."/>
            <person name="Chang J.L."/>
            <person name="Cuomo C.A."/>
            <person name="Eichler E."/>
            <person name="FitzGerald M.G."/>
            <person name="Jaffe D.B."/>
            <person name="LaButti K."/>
            <person name="Nicol R."/>
            <person name="Park H.-S."/>
            <person name="Seaman C."/>
            <person name="Sougnez C."/>
            <person name="Yang X."/>
            <person name="Zimmer A.R."/>
            <person name="Zody M.C."/>
            <person name="Birren B.W."/>
            <person name="Nusbaum C."/>
            <person name="Fujiyama A."/>
            <person name="Hattori M."/>
            <person name="Rogers J."/>
            <person name="Lander E.S."/>
            <person name="Sakaki Y."/>
        </authorList>
    </citation>
    <scope>NUCLEOTIDE SEQUENCE [LARGE SCALE GENOMIC DNA]</scope>
</reference>
<reference key="3">
    <citation type="journal article" date="2004" name="Genome Res.">
        <title>The status, quality, and expansion of the NIH full-length cDNA project: the Mammalian Gene Collection (MGC).</title>
        <authorList>
            <consortium name="The MGC Project Team"/>
        </authorList>
    </citation>
    <scope>NUCLEOTIDE SEQUENCE [LARGE SCALE MRNA] (ISOFORM 1)</scope>
    <source>
        <tissue>Brain</tissue>
    </source>
</reference>
<reference key="4">
    <citation type="journal article" date="2007" name="BMC Genomics">
        <title>The full-ORF clone resource of the German cDNA consortium.</title>
        <authorList>
            <person name="Bechtel S."/>
            <person name="Rosenfelder H."/>
            <person name="Duda A."/>
            <person name="Schmidt C.P."/>
            <person name="Ernst U."/>
            <person name="Wellenreuther R."/>
            <person name="Mehrle A."/>
            <person name="Schuster C."/>
            <person name="Bahr A."/>
            <person name="Bloecker H."/>
            <person name="Heubner D."/>
            <person name="Hoerlein A."/>
            <person name="Michel G."/>
            <person name="Wedler H."/>
            <person name="Koehrer K."/>
            <person name="Ottenwaelder B."/>
            <person name="Poustka A."/>
            <person name="Wiemann S."/>
            <person name="Schupp I."/>
        </authorList>
    </citation>
    <scope>NUCLEOTIDE SEQUENCE [LARGE SCALE MRNA] OF 626-1025 (ISOFORM 1/2)</scope>
    <source>
        <tissue>Rectum tumor</tissue>
    </source>
</reference>
<dbReference type="EMBL" id="AK091560">
    <property type="protein sequence ID" value="BAC03697.1"/>
    <property type="status" value="ALT_INIT"/>
    <property type="molecule type" value="mRNA"/>
</dbReference>
<dbReference type="EMBL" id="AK095632">
    <property type="protein sequence ID" value="BAC04595.1"/>
    <property type="molecule type" value="mRNA"/>
</dbReference>
<dbReference type="EMBL" id="AK291744">
    <property type="protein sequence ID" value="BAF84433.1"/>
    <property type="status" value="ALT_SEQ"/>
    <property type="molecule type" value="mRNA"/>
</dbReference>
<dbReference type="EMBL" id="AC090469">
    <property type="status" value="NOT_ANNOTATED_CDS"/>
    <property type="molecule type" value="Genomic_DNA"/>
</dbReference>
<dbReference type="EMBL" id="AL035079">
    <property type="status" value="NOT_ANNOTATED_CDS"/>
    <property type="molecule type" value="Genomic_DNA"/>
</dbReference>
<dbReference type="EMBL" id="AL133294">
    <property type="status" value="NOT_ANNOTATED_CDS"/>
    <property type="molecule type" value="Genomic_DNA"/>
</dbReference>
<dbReference type="EMBL" id="AL139174">
    <property type="status" value="NOT_ANNOTATED_CDS"/>
    <property type="molecule type" value="Genomic_DNA"/>
</dbReference>
<dbReference type="EMBL" id="BC093968">
    <property type="protein sequence ID" value="AAH93968.1"/>
    <property type="status" value="ALT_INIT"/>
    <property type="molecule type" value="mRNA"/>
</dbReference>
<dbReference type="EMBL" id="BX640841">
    <property type="protein sequence ID" value="CAE45913.3"/>
    <property type="molecule type" value="mRNA"/>
</dbReference>
<dbReference type="CCDS" id="CCDS7890.2">
    <molecule id="Q8N961-1"/>
</dbReference>
<dbReference type="RefSeq" id="NP_665803.2">
    <molecule id="Q8N961-1"/>
    <property type="nucleotide sequence ID" value="NM_145804.3"/>
</dbReference>
<dbReference type="SMR" id="Q8N961"/>
<dbReference type="BioGRID" id="117367">
    <property type="interactions" value="129"/>
</dbReference>
<dbReference type="FunCoup" id="Q8N961">
    <property type="interactions" value="135"/>
</dbReference>
<dbReference type="IntAct" id="Q8N961">
    <property type="interactions" value="88"/>
</dbReference>
<dbReference type="STRING" id="9606.ENSP00000410157"/>
<dbReference type="GlyGen" id="Q8N961">
    <property type="glycosylation" value="1 site, 1 O-linked glycan (1 site)"/>
</dbReference>
<dbReference type="iPTMnet" id="Q8N961"/>
<dbReference type="PhosphoSitePlus" id="Q8N961"/>
<dbReference type="BioMuta" id="ABTB2"/>
<dbReference type="DMDM" id="485955977"/>
<dbReference type="jPOST" id="Q8N961"/>
<dbReference type="MassIVE" id="Q8N961"/>
<dbReference type="PaxDb" id="9606-ENSP00000410157"/>
<dbReference type="PeptideAtlas" id="Q8N961"/>
<dbReference type="ProteomicsDB" id="23438"/>
<dbReference type="ProteomicsDB" id="72494">
    <molecule id="Q8N961-1"/>
</dbReference>
<dbReference type="Pumba" id="Q8N961"/>
<dbReference type="Antibodypedia" id="12992">
    <property type="antibodies" value="67 antibodies from 16 providers"/>
</dbReference>
<dbReference type="DNASU" id="25841"/>
<dbReference type="Ensembl" id="ENST00000435224.3">
    <molecule id="Q8N961-1"/>
    <property type="protein sequence ID" value="ENSP00000410157.2"/>
    <property type="gene ID" value="ENSG00000166016.6"/>
</dbReference>
<dbReference type="GeneID" id="25841"/>
<dbReference type="KEGG" id="hsa:25841"/>
<dbReference type="MANE-Select" id="ENST00000435224.3">
    <property type="protein sequence ID" value="ENSP00000410157.2"/>
    <property type="RefSeq nucleotide sequence ID" value="NM_145804.3"/>
    <property type="RefSeq protein sequence ID" value="NP_665803.2"/>
</dbReference>
<dbReference type="UCSC" id="uc001mvl.3">
    <molecule id="Q8N961-1"/>
    <property type="organism name" value="human"/>
</dbReference>
<dbReference type="AGR" id="HGNC:23842"/>
<dbReference type="CTD" id="25841"/>
<dbReference type="DisGeNET" id="25841"/>
<dbReference type="GeneCards" id="ABTB2"/>
<dbReference type="HGNC" id="HGNC:23842">
    <property type="gene designation" value="ABTB2"/>
</dbReference>
<dbReference type="HPA" id="ENSG00000166016">
    <property type="expression patterns" value="Tissue enhanced (brain)"/>
</dbReference>
<dbReference type="MIM" id="621014">
    <property type="type" value="gene"/>
</dbReference>
<dbReference type="neXtProt" id="NX_Q8N961"/>
<dbReference type="OpenTargets" id="ENSG00000166016"/>
<dbReference type="PharmGKB" id="PA134937734"/>
<dbReference type="VEuPathDB" id="HostDB:ENSG00000166016"/>
<dbReference type="eggNOG" id="ENOG502QSQY">
    <property type="taxonomic scope" value="Eukaryota"/>
</dbReference>
<dbReference type="GeneTree" id="ENSGT00940000157661"/>
<dbReference type="HOGENOM" id="CLU_001918_0_0_1"/>
<dbReference type="InParanoid" id="Q8N961"/>
<dbReference type="OMA" id="LQCNGST"/>
<dbReference type="OrthoDB" id="2316821at2759"/>
<dbReference type="PAN-GO" id="Q8N961">
    <property type="GO annotations" value="0 GO annotations based on evolutionary models"/>
</dbReference>
<dbReference type="PhylomeDB" id="Q8N961"/>
<dbReference type="TreeFam" id="TF106437"/>
<dbReference type="PathwayCommons" id="Q8N961"/>
<dbReference type="SignaLink" id="Q8N961"/>
<dbReference type="BioGRID-ORCS" id="25841">
    <property type="hits" value="19 hits in 1192 CRISPR screens"/>
</dbReference>
<dbReference type="ChiTaRS" id="ABTB2">
    <property type="organism name" value="human"/>
</dbReference>
<dbReference type="GenomeRNAi" id="25841"/>
<dbReference type="Pharos" id="Q8N961">
    <property type="development level" value="Tdark"/>
</dbReference>
<dbReference type="PRO" id="PR:Q8N961"/>
<dbReference type="Proteomes" id="UP000005640">
    <property type="component" value="Chromosome 11"/>
</dbReference>
<dbReference type="RNAct" id="Q8N961">
    <property type="molecule type" value="protein"/>
</dbReference>
<dbReference type="Bgee" id="ENSG00000166016">
    <property type="expression patterns" value="Expressed in secondary oocyte and 165 other cell types or tissues"/>
</dbReference>
<dbReference type="GO" id="GO:0046982">
    <property type="term" value="F:protein heterodimerization activity"/>
    <property type="evidence" value="ECO:0007669"/>
    <property type="project" value="InterPro"/>
</dbReference>
<dbReference type="GO" id="GO:0097237">
    <property type="term" value="P:cellular response to toxic substance"/>
    <property type="evidence" value="ECO:0007669"/>
    <property type="project" value="Ensembl"/>
</dbReference>
<dbReference type="CDD" id="cd18526">
    <property type="entry name" value="BACK_ABTB2"/>
    <property type="match status" value="1"/>
</dbReference>
<dbReference type="CDD" id="cd18350">
    <property type="entry name" value="BTB_POZ_ABTB2_BPOZ2"/>
    <property type="match status" value="1"/>
</dbReference>
<dbReference type="CDD" id="cd22913">
    <property type="entry name" value="HFD_ABTB2-like"/>
    <property type="match status" value="1"/>
</dbReference>
<dbReference type="FunFam" id="1.25.40.20:FF:000045">
    <property type="entry name" value="Ankyrin repeat and BTB/POZ domain-containing protein 2"/>
    <property type="match status" value="1"/>
</dbReference>
<dbReference type="FunFam" id="1.10.20.10:FF:000057">
    <property type="entry name" value="ankyrin repeat and BTB/POZ domain-containing protein 2"/>
    <property type="match status" value="1"/>
</dbReference>
<dbReference type="FunFam" id="3.30.710.10:FF:000030">
    <property type="entry name" value="Ankyrin repeat and BTB/POZ domain-containing protein BTBD11"/>
    <property type="match status" value="1"/>
</dbReference>
<dbReference type="Gene3D" id="1.25.40.20">
    <property type="entry name" value="Ankyrin repeat-containing domain"/>
    <property type="match status" value="1"/>
</dbReference>
<dbReference type="Gene3D" id="1.10.20.10">
    <property type="entry name" value="Histone, subunit A"/>
    <property type="match status" value="1"/>
</dbReference>
<dbReference type="Gene3D" id="3.30.710.10">
    <property type="entry name" value="Potassium Channel Kv1.1, Chain A"/>
    <property type="match status" value="1"/>
</dbReference>
<dbReference type="InterPro" id="IPR048063">
    <property type="entry name" value="ABTB2_BTB_POZ"/>
</dbReference>
<dbReference type="InterPro" id="IPR052089">
    <property type="entry name" value="Ankyrin-BTB/POZ_domain"/>
</dbReference>
<dbReference type="InterPro" id="IPR002110">
    <property type="entry name" value="Ankyrin_rpt"/>
</dbReference>
<dbReference type="InterPro" id="IPR036770">
    <property type="entry name" value="Ankyrin_rpt-contain_sf"/>
</dbReference>
<dbReference type="InterPro" id="IPR000210">
    <property type="entry name" value="BTB/POZ_dom"/>
</dbReference>
<dbReference type="InterPro" id="IPR009072">
    <property type="entry name" value="Histone-fold"/>
</dbReference>
<dbReference type="InterPro" id="IPR011333">
    <property type="entry name" value="SKP1/BTB/POZ_sf"/>
</dbReference>
<dbReference type="PANTHER" id="PTHR46071">
    <property type="entry name" value="ANKYRIN REPEAT AND BTB/POZ DOMAIN-CONTAINING"/>
    <property type="match status" value="1"/>
</dbReference>
<dbReference type="PANTHER" id="PTHR46071:SF3">
    <property type="entry name" value="ANKYRIN REPEAT AND BTB_POZ DOMAIN-CONTAINING PROTEIN 2"/>
    <property type="match status" value="1"/>
</dbReference>
<dbReference type="Pfam" id="PF00023">
    <property type="entry name" value="Ank"/>
    <property type="match status" value="1"/>
</dbReference>
<dbReference type="Pfam" id="PF12796">
    <property type="entry name" value="Ank_2"/>
    <property type="match status" value="1"/>
</dbReference>
<dbReference type="Pfam" id="PF00651">
    <property type="entry name" value="BTB"/>
    <property type="match status" value="1"/>
</dbReference>
<dbReference type="SMART" id="SM00248">
    <property type="entry name" value="ANK"/>
    <property type="match status" value="5"/>
</dbReference>
<dbReference type="SMART" id="SM00225">
    <property type="entry name" value="BTB"/>
    <property type="match status" value="1"/>
</dbReference>
<dbReference type="SUPFAM" id="SSF48403">
    <property type="entry name" value="Ankyrin repeat"/>
    <property type="match status" value="1"/>
</dbReference>
<dbReference type="SUPFAM" id="SSF47113">
    <property type="entry name" value="Histone-fold"/>
    <property type="match status" value="2"/>
</dbReference>
<dbReference type="SUPFAM" id="SSF54695">
    <property type="entry name" value="POZ domain"/>
    <property type="match status" value="1"/>
</dbReference>
<dbReference type="PROSITE" id="PS50297">
    <property type="entry name" value="ANK_REP_REGION"/>
    <property type="match status" value="1"/>
</dbReference>
<dbReference type="PROSITE" id="PS50088">
    <property type="entry name" value="ANK_REPEAT"/>
    <property type="match status" value="3"/>
</dbReference>
<dbReference type="PROSITE" id="PS50097">
    <property type="entry name" value="BTB"/>
    <property type="match status" value="1"/>
</dbReference>
<proteinExistence type="evidence at protein level"/>
<gene>
    <name type="primary">ABTB2</name>
</gene>
<keyword id="KW-0025">Alternative splicing</keyword>
<keyword id="KW-0040">ANK repeat</keyword>
<keyword id="KW-1267">Proteomics identification</keyword>
<keyword id="KW-1185">Reference proteome</keyword>
<keyword id="KW-0677">Repeat</keyword>
<comment type="function">
    <text evidence="1">May be involved in the initiation of hepatocyte growth.</text>
</comment>
<comment type="interaction">
    <interactant intactId="EBI-11603395">
        <id>Q8N961</id>
    </interactant>
    <interactant intactId="EBI-356498">
        <id>P62258</id>
        <label>YWHAE</label>
    </interactant>
    <organismsDiffer>false</organismsDiffer>
    <experiments>2</experiments>
</comment>
<comment type="alternative products">
    <event type="alternative splicing"/>
    <isoform>
        <id>Q8N961-1</id>
        <name>1</name>
        <sequence type="displayed"/>
    </isoform>
    <isoform>
        <id>Q8N961-2</id>
        <name>2</name>
        <sequence type="described" ref="VSP_046439"/>
    </isoform>
</comment>
<comment type="sequence caution" evidence="5">
    <conflict type="erroneous initiation">
        <sequence resource="EMBL-CDS" id="AAH93968"/>
    </conflict>
    <text>Truncated N-terminus.</text>
</comment>
<comment type="sequence caution" evidence="5">
    <conflict type="erroneous initiation">
        <sequence resource="EMBL-CDS" id="BAC03697"/>
    </conflict>
    <text>Truncated N-terminus.</text>
</comment>
<comment type="sequence caution" evidence="5">
    <conflict type="erroneous initiation">
        <sequence resource="EMBL-CDS" id="BAF84433"/>
    </conflict>
    <text>Truncated N-terminus.</text>
</comment>
<comment type="sequence caution" evidence="5">
    <conflict type="erroneous termination">
        <sequence resource="EMBL-CDS" id="BAF84433"/>
    </conflict>
    <text>Truncated C-terminus.</text>
</comment>
<protein>
    <recommendedName>
        <fullName>Ankyrin repeat and BTB/POZ domain-containing protein 2</fullName>
    </recommendedName>
</protein>
<name>ABTB2_HUMAN</name>
<sequence>MAGTYSSTLKTLEDLTLDSGYGAGDSCRSLSLSSSKSNSQALNSSAQQHRGAAWWCYSGSMNSRHNSWDTVNTVLPEDPEVADLFSRCPRLPELEEFPWTEGDVARVLRKGAGGRRLPQFSAEAVRRLAGLLRRALIRVAREAQRLSVLHAKCTRFEVQSAVRLVHSWALAESCALAAVKALSLYSMSAGDGLRRGKSARCGLTFSVGRFFRWMVDTRISVRIHEYAAISLTACMENLVEEIRARVMASHSPDGGGAGGGEVSAEALEMVINNDAELWGVLQPYEHLICGKNANGVLSLPAYFSPYNGGSLGHDERADAYAQLELRTLEQSLLATCVGSISELSDLVSRAMHHMQGRHPLCPGASPARQARQPPQPITWSPDALHTLYYFLRCPQMESMENPNLDPPRMTLNNERPFMLLPPLMEWMRVAITYAEHRRSLTVDSGDIRQAARLLLPGLDCEPRQLKPEHCFSSFRRLDARAATEKFNQDLGFRMLNCGRTDLINQAIEALGPDGVNTMDDQGMTPLMYACAAGDEAMVQMLIDAGANLDIQVPSNSPRHPSIHPDSRHWTSLTFAVLHGHISVVQLLLDAGAHVEGSAVNGGEDSYAETPLQLASAAGNYELVSLLLSRGADPLLSMLEAHGMGSSLHEDMNCFSHSAAHGHRNVLRKLLTQPQQAKADVLSLEEILAEGVEESDASSQGSGSEGPVRLSRTRTKALQEAMYYSAEHGYVDITMELRALGVPWKLHIWIESLRTSFSQSRYSVVQSLLRDFSSIREEEYNEELVTEGLQLMFDILKTSKNDSVIQQLATIFTHCYGSSPIPSIPEIRKTLPARLDPHFLNNKEMSDVTFLVEGKLFYAHKVLLVTASNRFKTLMTNKSEQDGDSSKTIEISDMKYHIFQMMMQYLYYGGTESMEIPTTDILELLSAASLFQLDALQRHCEILCSQTLSMESAVNTYKYAKIHNAPELALFCEGFFLKHMKALLEQDAFRQLIYGRSSKVQGLDPLQDLQNTLAERVHSVYITSRV</sequence>